<name>CIMA_METMJ</name>
<proteinExistence type="inferred from homology"/>
<accession>A3CUF2</accession>
<organism>
    <name type="scientific">Methanoculleus marisnigri (strain ATCC 35101 / DSM 1498 / JR1)</name>
    <dbReference type="NCBI Taxonomy" id="368407"/>
    <lineage>
        <taxon>Archaea</taxon>
        <taxon>Methanobacteriati</taxon>
        <taxon>Methanobacteriota</taxon>
        <taxon>Stenosarchaea group</taxon>
        <taxon>Methanomicrobia</taxon>
        <taxon>Methanomicrobiales</taxon>
        <taxon>Methanomicrobiaceae</taxon>
        <taxon>Methanoculleus</taxon>
    </lineage>
</organism>
<gene>
    <name evidence="1" type="primary">cimA</name>
    <name type="ordered locus">Memar_1069</name>
</gene>
<protein>
    <recommendedName>
        <fullName evidence="1">Putative (R)-citramalate synthase CimA</fullName>
        <ecNumber evidence="1">2.3.3.21</ecNumber>
    </recommendedName>
</protein>
<evidence type="ECO:0000255" key="1">
    <source>
        <dbReference type="HAMAP-Rule" id="MF_01028"/>
    </source>
</evidence>
<evidence type="ECO:0000255" key="2">
    <source>
        <dbReference type="PROSITE-ProRule" id="PRU01151"/>
    </source>
</evidence>
<keyword id="KW-0028">Amino-acid biosynthesis</keyword>
<keyword id="KW-0100">Branched-chain amino acid biosynthesis</keyword>
<keyword id="KW-0412">Isoleucine biosynthesis</keyword>
<keyword id="KW-0808">Transferase</keyword>
<dbReference type="EC" id="2.3.3.21" evidence="1"/>
<dbReference type="EMBL" id="CP000562">
    <property type="protein sequence ID" value="ABN57002.1"/>
    <property type="molecule type" value="Genomic_DNA"/>
</dbReference>
<dbReference type="RefSeq" id="WP_011843913.1">
    <property type="nucleotide sequence ID" value="NC_009051.1"/>
</dbReference>
<dbReference type="SMR" id="A3CUF2"/>
<dbReference type="STRING" id="368407.Memar_1069"/>
<dbReference type="GeneID" id="4847429"/>
<dbReference type="KEGG" id="mem:Memar_1069"/>
<dbReference type="eggNOG" id="arCOG02092">
    <property type="taxonomic scope" value="Archaea"/>
</dbReference>
<dbReference type="HOGENOM" id="CLU_022158_0_1_2"/>
<dbReference type="OrthoDB" id="6555at2157"/>
<dbReference type="UniPathway" id="UPA00047">
    <property type="reaction ID" value="UER00066"/>
</dbReference>
<dbReference type="Proteomes" id="UP000002146">
    <property type="component" value="Chromosome"/>
</dbReference>
<dbReference type="GO" id="GO:0043714">
    <property type="term" value="F:(R)-citramalate synthase activity"/>
    <property type="evidence" value="ECO:0007669"/>
    <property type="project" value="InterPro"/>
</dbReference>
<dbReference type="GO" id="GO:0003852">
    <property type="term" value="F:2-isopropylmalate synthase activity"/>
    <property type="evidence" value="ECO:0007669"/>
    <property type="project" value="InterPro"/>
</dbReference>
<dbReference type="GO" id="GO:0009097">
    <property type="term" value="P:isoleucine biosynthetic process"/>
    <property type="evidence" value="ECO:0007669"/>
    <property type="project" value="UniProtKB-UniRule"/>
</dbReference>
<dbReference type="GO" id="GO:0009098">
    <property type="term" value="P:L-leucine biosynthetic process"/>
    <property type="evidence" value="ECO:0007669"/>
    <property type="project" value="InterPro"/>
</dbReference>
<dbReference type="CDD" id="cd07940">
    <property type="entry name" value="DRE_TIM_IPMS"/>
    <property type="match status" value="1"/>
</dbReference>
<dbReference type="FunFam" id="1.10.238.260:FF:000001">
    <property type="entry name" value="2-isopropylmalate synthase"/>
    <property type="match status" value="1"/>
</dbReference>
<dbReference type="Gene3D" id="1.10.238.260">
    <property type="match status" value="1"/>
</dbReference>
<dbReference type="Gene3D" id="3.30.160.270">
    <property type="match status" value="1"/>
</dbReference>
<dbReference type="Gene3D" id="3.20.20.70">
    <property type="entry name" value="Aldolase class I"/>
    <property type="match status" value="1"/>
</dbReference>
<dbReference type="HAMAP" id="MF_01028">
    <property type="entry name" value="CimA"/>
    <property type="match status" value="1"/>
</dbReference>
<dbReference type="InterPro" id="IPR013709">
    <property type="entry name" value="2-isopropylmalate_synth_dimer"/>
</dbReference>
<dbReference type="InterPro" id="IPR002034">
    <property type="entry name" value="AIPM/Hcit_synth_CS"/>
</dbReference>
<dbReference type="InterPro" id="IPR013785">
    <property type="entry name" value="Aldolase_TIM"/>
</dbReference>
<dbReference type="InterPro" id="IPR024890">
    <property type="entry name" value="Citramalate_synthase_CimA"/>
</dbReference>
<dbReference type="InterPro" id="IPR011830">
    <property type="entry name" value="LEU1_arch"/>
</dbReference>
<dbReference type="InterPro" id="IPR054691">
    <property type="entry name" value="LeuA/HCS_post-cat"/>
</dbReference>
<dbReference type="InterPro" id="IPR036230">
    <property type="entry name" value="LeuA_allosteric_dom_sf"/>
</dbReference>
<dbReference type="InterPro" id="IPR000891">
    <property type="entry name" value="PYR_CT"/>
</dbReference>
<dbReference type="NCBIfam" id="TIGR02090">
    <property type="entry name" value="LEU1_arch"/>
    <property type="match status" value="1"/>
</dbReference>
<dbReference type="NCBIfam" id="NF002085">
    <property type="entry name" value="PRK00915.1-2"/>
    <property type="match status" value="1"/>
</dbReference>
<dbReference type="PANTHER" id="PTHR42880:SF2">
    <property type="entry name" value="(R)-CITRAMALATE SYNTHASE CIMA"/>
    <property type="match status" value="1"/>
</dbReference>
<dbReference type="PANTHER" id="PTHR42880">
    <property type="entry name" value="HOMOCITRATE SYNTHASE"/>
    <property type="match status" value="1"/>
</dbReference>
<dbReference type="Pfam" id="PF22617">
    <property type="entry name" value="HCS_D2"/>
    <property type="match status" value="1"/>
</dbReference>
<dbReference type="Pfam" id="PF00682">
    <property type="entry name" value="HMGL-like"/>
    <property type="match status" value="1"/>
</dbReference>
<dbReference type="Pfam" id="PF08502">
    <property type="entry name" value="LeuA_dimer"/>
    <property type="match status" value="1"/>
</dbReference>
<dbReference type="SMART" id="SM00917">
    <property type="entry name" value="LeuA_dimer"/>
    <property type="match status" value="1"/>
</dbReference>
<dbReference type="SUPFAM" id="SSF110921">
    <property type="entry name" value="2-isopropylmalate synthase LeuA, allosteric (dimerisation) domain"/>
    <property type="match status" value="1"/>
</dbReference>
<dbReference type="SUPFAM" id="SSF51569">
    <property type="entry name" value="Aldolase"/>
    <property type="match status" value="1"/>
</dbReference>
<dbReference type="PROSITE" id="PS00815">
    <property type="entry name" value="AIPM_HOMOCIT_SYNTH_1"/>
    <property type="match status" value="1"/>
</dbReference>
<dbReference type="PROSITE" id="PS00816">
    <property type="entry name" value="AIPM_HOMOCIT_SYNTH_2"/>
    <property type="match status" value="1"/>
</dbReference>
<dbReference type="PROSITE" id="PS50991">
    <property type="entry name" value="PYR_CT"/>
    <property type="match status" value="1"/>
</dbReference>
<feature type="chain" id="PRO_0000407913" description="Putative (R)-citramalate synthase CimA">
    <location>
        <begin position="1"/>
        <end position="503"/>
    </location>
</feature>
<feature type="domain" description="Pyruvate carboxyltransferase" evidence="2">
    <location>
        <begin position="9"/>
        <end position="257"/>
    </location>
</feature>
<reference key="1">
    <citation type="journal article" date="2009" name="Stand. Genomic Sci.">
        <title>Complete genome sequence of Methanoculleus marisnigri Romesser et al. 1981 type strain JR1.</title>
        <authorList>
            <person name="Anderson I.J."/>
            <person name="Sieprawska-Lupa M."/>
            <person name="Lapidus A."/>
            <person name="Nolan M."/>
            <person name="Copeland A."/>
            <person name="Glavina Del Rio T."/>
            <person name="Tice H."/>
            <person name="Dalin E."/>
            <person name="Barry K."/>
            <person name="Saunders E."/>
            <person name="Han C."/>
            <person name="Brettin T."/>
            <person name="Detter J.C."/>
            <person name="Bruce D."/>
            <person name="Mikhailova N."/>
            <person name="Pitluck S."/>
            <person name="Hauser L."/>
            <person name="Land M."/>
            <person name="Lucas S."/>
            <person name="Richardson P."/>
            <person name="Whitman W.B."/>
            <person name="Kyrpides N.C."/>
        </authorList>
    </citation>
    <scope>NUCLEOTIDE SEQUENCE [LARGE SCALE GENOMIC DNA]</scope>
    <source>
        <strain>ATCC 35101 / DSM 1498 / JR1</strain>
    </source>
</reference>
<comment type="function">
    <text evidence="1">Catalyzes the condensation of pyruvate and acetyl-coenzyme A to form (R)-citramalate.</text>
</comment>
<comment type="catalytic activity">
    <reaction evidence="1">
        <text>pyruvate + acetyl-CoA + H2O = (3R)-citramalate + CoA + H(+)</text>
        <dbReference type="Rhea" id="RHEA:19045"/>
        <dbReference type="ChEBI" id="CHEBI:15361"/>
        <dbReference type="ChEBI" id="CHEBI:15377"/>
        <dbReference type="ChEBI" id="CHEBI:15378"/>
        <dbReference type="ChEBI" id="CHEBI:30934"/>
        <dbReference type="ChEBI" id="CHEBI:57287"/>
        <dbReference type="ChEBI" id="CHEBI:57288"/>
        <dbReference type="EC" id="2.3.3.21"/>
    </reaction>
</comment>
<comment type="pathway">
    <text evidence="1">Amino-acid biosynthesis; L-isoleucine biosynthesis; 2-oxobutanoate from pyruvate: step 1/3.</text>
</comment>
<comment type="subunit">
    <text evidence="1">Homodimer.</text>
</comment>
<comment type="similarity">
    <text evidence="1">Belongs to the alpha-IPM synthase/homocitrate synthase family.</text>
</comment>
<sequence>MIVLFVEPIRFFDTTLRDGEQTPGVSLTPAGKLEIATHLADVGVHVIEAGSAAASVGERESIRAIADAGLAAECCTYVRALPGDIDLAADAGADSVHLVVPVSDLHIAKKLRKTREQVSEMAWSAVEYAKERGLVVELSGEDASRADQDFLAEVFREGVERGADRLCFCDTVGLLTPERAAAIIPPLLFAPLSIHCHDDLGFGLATTVAALRAGATCAHVTVNGLGERAGNTSLEELVMALEVLYGVDTGIATEELYPLSTHVARLTGVPLATNKPIVGEMAFTHESGIHAHGVMRDASTYEPLQPERVGRRRRIVLGKHSGSAAVEAALHDMGYAPSAAQLKEIVDRIKRLGDAGMRITDADIMAIADTVMEIEFTPCIELRQFTIVSGSNAIPTASVTMLVRGEEITGAAVGTGPVDAAIRALQRSVADVGSVRLDEYSVDAITGGTDALVDVSVKLSKDGKTVTSRGARTDIIMASVEAVIAGMNRLLREEHEDRSQDSD</sequence>